<organism>
    <name type="scientific">Shigella flexneri</name>
    <dbReference type="NCBI Taxonomy" id="623"/>
    <lineage>
        <taxon>Bacteria</taxon>
        <taxon>Pseudomonadati</taxon>
        <taxon>Pseudomonadota</taxon>
        <taxon>Gammaproteobacteria</taxon>
        <taxon>Enterobacterales</taxon>
        <taxon>Enterobacteriaceae</taxon>
        <taxon>Shigella</taxon>
    </lineage>
</organism>
<name>SLYB_SHIFL</name>
<proteinExistence type="inferred from homology"/>
<protein>
    <recommendedName>
        <fullName>Outer membrane lipoprotein SlyB</fullName>
    </recommendedName>
</protein>
<comment type="subcellular location">
    <subcellularLocation>
        <location evidence="2">Cell outer membrane</location>
        <topology evidence="1">Lipid-anchor</topology>
    </subcellularLocation>
</comment>
<comment type="similarity">
    <text evidence="2">Belongs to the Pcp/SlyB lipoprotein family.</text>
</comment>
<feature type="signal peptide" evidence="1">
    <location>
        <begin position="1"/>
        <end position="17"/>
    </location>
</feature>
<feature type="chain" id="PRO_0000018165" description="Outer membrane lipoprotein SlyB">
    <location>
        <begin position="18"/>
        <end position="155"/>
    </location>
</feature>
<feature type="lipid moiety-binding region" description="N-palmitoyl cysteine" evidence="1">
    <location>
        <position position="18"/>
    </location>
</feature>
<feature type="lipid moiety-binding region" description="S-diacylglycerol cysteine" evidence="1">
    <location>
        <position position="18"/>
    </location>
</feature>
<evidence type="ECO:0000255" key="1">
    <source>
        <dbReference type="PROSITE-ProRule" id="PRU00303"/>
    </source>
</evidence>
<evidence type="ECO:0000305" key="2"/>
<gene>
    <name type="primary">slyB</name>
    <name type="ordered locus">SF1668</name>
    <name type="ordered locus">S1800</name>
</gene>
<accession>P0A907</accession>
<accession>P55741</accession>
<accession>P76183</accession>
<dbReference type="EMBL" id="AE005674">
    <property type="protein sequence ID" value="AAN43250.1"/>
    <property type="molecule type" value="Genomic_DNA"/>
</dbReference>
<dbReference type="EMBL" id="AE014073">
    <property type="protein sequence ID" value="AAP17136.1"/>
    <property type="molecule type" value="Genomic_DNA"/>
</dbReference>
<dbReference type="RefSeq" id="NP_707543.1">
    <property type="nucleotide sequence ID" value="NC_004337.2"/>
</dbReference>
<dbReference type="RefSeq" id="WP_000597196.1">
    <property type="nucleotide sequence ID" value="NZ_WPGW01000025.1"/>
</dbReference>
<dbReference type="SMR" id="P0A907"/>
<dbReference type="STRING" id="198214.SF1668"/>
<dbReference type="PaxDb" id="198214-SF1668"/>
<dbReference type="GeneID" id="1024859"/>
<dbReference type="GeneID" id="93775795"/>
<dbReference type="KEGG" id="sfl:SF1668"/>
<dbReference type="KEGG" id="sfx:S1800"/>
<dbReference type="PATRIC" id="fig|198214.7.peg.1965"/>
<dbReference type="HOGENOM" id="CLU_090265_3_1_6"/>
<dbReference type="Proteomes" id="UP000001006">
    <property type="component" value="Chromosome"/>
</dbReference>
<dbReference type="Proteomes" id="UP000002673">
    <property type="component" value="Chromosome"/>
</dbReference>
<dbReference type="GO" id="GO:0009279">
    <property type="term" value="C:cell outer membrane"/>
    <property type="evidence" value="ECO:0007669"/>
    <property type="project" value="UniProtKB-SubCell"/>
</dbReference>
<dbReference type="InterPro" id="IPR051407">
    <property type="entry name" value="Bact_OM_lipoprot/Surf_antigen"/>
</dbReference>
<dbReference type="InterPro" id="IPR008816">
    <property type="entry name" value="Gly_zipper_2TM_dom"/>
</dbReference>
<dbReference type="PANTHER" id="PTHR35603">
    <property type="match status" value="1"/>
</dbReference>
<dbReference type="PANTHER" id="PTHR35603:SF1">
    <property type="entry name" value="OUTER MEMBRANE LIPOPROTEIN SLYB"/>
    <property type="match status" value="1"/>
</dbReference>
<dbReference type="Pfam" id="PF05433">
    <property type="entry name" value="Rick_17kDa_Anti"/>
    <property type="match status" value="1"/>
</dbReference>
<dbReference type="PROSITE" id="PS51257">
    <property type="entry name" value="PROKAR_LIPOPROTEIN"/>
    <property type="match status" value="1"/>
</dbReference>
<keyword id="KW-0998">Cell outer membrane</keyword>
<keyword id="KW-0449">Lipoprotein</keyword>
<keyword id="KW-0472">Membrane</keyword>
<keyword id="KW-0564">Palmitate</keyword>
<keyword id="KW-1185">Reference proteome</keyword>
<keyword id="KW-0732">Signal</keyword>
<sequence length="155" mass="15602">MIKRVLVVSMVGLSLVGCVNNDTLSGDVYTASEAKQVQNVSYGTIVNVRPVQIQGGDDSNVIGAIGGAVLGGFLGNTVGGGTGRSLATAAGAVAGGVAGQGVQSAMNKTQGVELEIRKDDGNTIMVVQKQGNTRFSPGQRVVLASNGSQVTVSPR</sequence>
<reference key="1">
    <citation type="journal article" date="2002" name="Nucleic Acids Res.">
        <title>Genome sequence of Shigella flexneri 2a: insights into pathogenicity through comparison with genomes of Escherichia coli K12 and O157.</title>
        <authorList>
            <person name="Jin Q."/>
            <person name="Yuan Z."/>
            <person name="Xu J."/>
            <person name="Wang Y."/>
            <person name="Shen Y."/>
            <person name="Lu W."/>
            <person name="Wang J."/>
            <person name="Liu H."/>
            <person name="Yang J."/>
            <person name="Yang F."/>
            <person name="Zhang X."/>
            <person name="Zhang J."/>
            <person name="Yang G."/>
            <person name="Wu H."/>
            <person name="Qu D."/>
            <person name="Dong J."/>
            <person name="Sun L."/>
            <person name="Xue Y."/>
            <person name="Zhao A."/>
            <person name="Gao Y."/>
            <person name="Zhu J."/>
            <person name="Kan B."/>
            <person name="Ding K."/>
            <person name="Chen S."/>
            <person name="Cheng H."/>
            <person name="Yao Z."/>
            <person name="He B."/>
            <person name="Chen R."/>
            <person name="Ma D."/>
            <person name="Qiang B."/>
            <person name="Wen Y."/>
            <person name="Hou Y."/>
            <person name="Yu J."/>
        </authorList>
    </citation>
    <scope>NUCLEOTIDE SEQUENCE [LARGE SCALE GENOMIC DNA]</scope>
    <source>
        <strain>301 / Serotype 2a</strain>
    </source>
</reference>
<reference key="2">
    <citation type="journal article" date="2003" name="Infect. Immun.">
        <title>Complete genome sequence and comparative genomics of Shigella flexneri serotype 2a strain 2457T.</title>
        <authorList>
            <person name="Wei J."/>
            <person name="Goldberg M.B."/>
            <person name="Burland V."/>
            <person name="Venkatesan M.M."/>
            <person name="Deng W."/>
            <person name="Fournier G."/>
            <person name="Mayhew G.F."/>
            <person name="Plunkett G. III"/>
            <person name="Rose D.J."/>
            <person name="Darling A."/>
            <person name="Mau B."/>
            <person name="Perna N.T."/>
            <person name="Payne S.M."/>
            <person name="Runyen-Janecky L.J."/>
            <person name="Zhou S."/>
            <person name="Schwartz D.C."/>
            <person name="Blattner F.R."/>
        </authorList>
    </citation>
    <scope>NUCLEOTIDE SEQUENCE [LARGE SCALE GENOMIC DNA]</scope>
    <source>
        <strain>ATCC 700930 / 2457T / Serotype 2a</strain>
    </source>
</reference>